<comment type="function">
    <text evidence="2">Beta-adrenergic receptors mediate the catecholamine-induced activation of adenylate cyclase through the action of G proteins. The beta-2-adrenergic receptor binds epinephrine with an approximately 30-fold greater affinity than it does norepinephrine (By similarity).</text>
</comment>
<comment type="subunit">
    <text evidence="2">Binds NHERF1 and GPRASP1. Interacts with ARRB1 and ARRB2. Interacts with SRC (By similarity). Interacts with USP20 and USP33 (By similarity). Interacts with VHL; the interaction, which is increased on hydroxylation of ADRB2, ubiquitinates ADRB2 leading to its degradation. Interacts with EGLN3; the interaction hydroxylates ADRB2 facilitating VHL-E3 ligase-mediated ubiquitination. Interacts (via PDZ-binding motif) with SNX27 (via PDZ domain); the interaction is required when endocytosed to prevent degradation in lysosomes and promote recycling to the plasma membrane. Interacts with CNIH4. Interacts with ARRDC3. Interacts with NEDD4 (By similarity). Interacts with MARCHF2 (By similarity).</text>
</comment>
<comment type="subcellular location">
    <subcellularLocation>
        <location evidence="2">Cell membrane</location>
        <topology evidence="2">Multi-pass membrane protein</topology>
    </subcellularLocation>
    <subcellularLocation>
        <location evidence="2">Early endosome</location>
    </subcellularLocation>
    <subcellularLocation>
        <location evidence="2">Golgi apparatus</location>
    </subcellularLocation>
    <text evidence="2">Colocalizes with VHL at the cell membrane. Activated receptors are internalized into endosomes prior to their degradation in lysosomes. Activated receptors are also detected within the Golgi apparatus.</text>
</comment>
<comment type="PTM">
    <text evidence="1">Palmitoylated; may reduce accessibility of Ser-345 and Ser-346 by anchoring Cys-341 to the plasma membrane. Agonist stimulation promotes depalmitoylation and further allows Ser-345 and Ser-346 phosphorylation (By similarity).</text>
</comment>
<comment type="PTM">
    <text>Phosphorylated by PKA and BARK upon agonist stimulation, which mediates homologous desensitization of the receptor. PKA-mediated phosphorylation seems to facilitate phosphorylation by BARK.</text>
</comment>
<comment type="PTM">
    <text evidence="1">Phosphorylation of Tyr-141 is induced by insulin and leads to supersensitization of the receptor.</text>
</comment>
<comment type="PTM">
    <text evidence="1">Polyubiquitinated. Agonist-induced ubiquitination leads to sort internalized receptors to the lysosomes for degradation. Deubiquitination by USP20 and USP33, leads to ADRB2 recycling and resensitization after prolonged agonist stimulation. USP20 and USP33 are constitutively associated and are dissociated immediately after agonist stimulation. Ubiquitination by the VHL-E3 ligase complex is oxygen-dependent (By similarity).</text>
</comment>
<comment type="PTM">
    <text evidence="1">Hydroxylation by EGLN3 occurs only under normoxia and increases the interaction with VHL and the subsequent ubiquitination and degradation of ADRB2.</text>
</comment>
<comment type="PTM">
    <text evidence="2">Palmitoylated. Mainly palmitoylated at Cys-341. Palmitoylation may reduce accessibility of phosphorylation sites by anchoring the receptor to the plasma membrane. Agonist stimulation promotes depalmitoylation and further allows Ser-345 and Ser-346 phosphorylation. Also undergoes transient, ligand-induced palmitoylation at Cys-265 probably by ZDHHC9, ZDHHC14 and ZDHHC18 within the Golgi. Palmitoylation at Cys-265 requires phosphorylation by PKA and receptor internalization and stabilizes the receptor. Could be depalmitoylated by LYPLA1 at the plasma membrane.</text>
</comment>
<comment type="similarity">
    <text evidence="4">Belongs to the G-protein coupled receptor 1 family. Adrenergic receptor subfamily. ADRB2 sub-subfamily.</text>
</comment>
<evidence type="ECO:0000250" key="1"/>
<evidence type="ECO:0000250" key="2">
    <source>
        <dbReference type="UniProtKB" id="P07550"/>
    </source>
</evidence>
<evidence type="ECO:0000255" key="3"/>
<evidence type="ECO:0000255" key="4">
    <source>
        <dbReference type="PROSITE-ProRule" id="PRU00521"/>
    </source>
</evidence>
<evidence type="ECO:0000256" key="5">
    <source>
        <dbReference type="SAM" id="MobiDB-lite"/>
    </source>
</evidence>
<evidence type="ECO:0000305" key="6"/>
<organism>
    <name type="scientific">Tscherskia triton</name>
    <name type="common">Greater long-tailed hamster</name>
    <dbReference type="NCBI Taxonomy" id="329627"/>
    <lineage>
        <taxon>Eukaryota</taxon>
        <taxon>Metazoa</taxon>
        <taxon>Chordata</taxon>
        <taxon>Craniata</taxon>
        <taxon>Vertebrata</taxon>
        <taxon>Euteleostomi</taxon>
        <taxon>Mammalia</taxon>
        <taxon>Eutheria</taxon>
        <taxon>Euarchontoglires</taxon>
        <taxon>Glires</taxon>
        <taxon>Rodentia</taxon>
        <taxon>Myomorpha</taxon>
        <taxon>Muroidea</taxon>
        <taxon>Cricetidae</taxon>
        <taxon>Cricetinae</taxon>
        <taxon>Tscherskia</taxon>
    </lineage>
</organism>
<dbReference type="EMBL" id="AY683091">
    <property type="protein sequence ID" value="AAV85858.1"/>
    <property type="molecule type" value="mRNA"/>
</dbReference>
<dbReference type="SMR" id="Q4KWL2"/>
<dbReference type="GlyCosmos" id="Q4KWL2">
    <property type="glycosylation" value="2 sites, No reported glycans"/>
</dbReference>
<dbReference type="GO" id="GO:0005769">
    <property type="term" value="C:early endosome"/>
    <property type="evidence" value="ECO:0007669"/>
    <property type="project" value="UniProtKB-SubCell"/>
</dbReference>
<dbReference type="GO" id="GO:0005794">
    <property type="term" value="C:Golgi apparatus"/>
    <property type="evidence" value="ECO:0007669"/>
    <property type="project" value="UniProtKB-SubCell"/>
</dbReference>
<dbReference type="GO" id="GO:0005886">
    <property type="term" value="C:plasma membrane"/>
    <property type="evidence" value="ECO:0007669"/>
    <property type="project" value="UniProtKB-SubCell"/>
</dbReference>
<dbReference type="GO" id="GO:0004941">
    <property type="term" value="F:beta2-adrenergic receptor activity"/>
    <property type="evidence" value="ECO:0007669"/>
    <property type="project" value="InterPro"/>
</dbReference>
<dbReference type="GO" id="GO:0051380">
    <property type="term" value="F:norepinephrine binding"/>
    <property type="evidence" value="ECO:0007669"/>
    <property type="project" value="TreeGrafter"/>
</dbReference>
<dbReference type="GO" id="GO:0071880">
    <property type="term" value="P:adenylate cyclase-activating adrenergic receptor signaling pathway"/>
    <property type="evidence" value="ECO:0007669"/>
    <property type="project" value="TreeGrafter"/>
</dbReference>
<dbReference type="GO" id="GO:0002025">
    <property type="term" value="P:norepinephrine-epinephrine-mediated vasodilation involved in regulation of systemic arterial blood pressure"/>
    <property type="evidence" value="ECO:0007669"/>
    <property type="project" value="TreeGrafter"/>
</dbReference>
<dbReference type="GO" id="GO:1901098">
    <property type="term" value="P:positive regulation of autophagosome maturation"/>
    <property type="evidence" value="ECO:0000250"/>
    <property type="project" value="GO_Central"/>
</dbReference>
<dbReference type="GO" id="GO:1904504">
    <property type="term" value="P:positive regulation of lipophagy"/>
    <property type="evidence" value="ECO:0000250"/>
    <property type="project" value="GO_Central"/>
</dbReference>
<dbReference type="GO" id="GO:0043410">
    <property type="term" value="P:positive regulation of MAPK cascade"/>
    <property type="evidence" value="ECO:0007669"/>
    <property type="project" value="TreeGrafter"/>
</dbReference>
<dbReference type="GO" id="GO:0006940">
    <property type="term" value="P:regulation of smooth muscle contraction"/>
    <property type="evidence" value="ECO:0007669"/>
    <property type="project" value="InterPro"/>
</dbReference>
<dbReference type="CDD" id="cd15957">
    <property type="entry name" value="7tmA_Beta2_AR"/>
    <property type="match status" value="1"/>
</dbReference>
<dbReference type="FunFam" id="1.20.1070.10:FF:000057">
    <property type="entry name" value="Beta-1 adrenergic receptor"/>
    <property type="match status" value="1"/>
</dbReference>
<dbReference type="Gene3D" id="1.20.1070.10">
    <property type="entry name" value="Rhodopsin 7-helix transmembrane proteins"/>
    <property type="match status" value="1"/>
</dbReference>
<dbReference type="InterPro" id="IPR002233">
    <property type="entry name" value="ADR_fam"/>
</dbReference>
<dbReference type="InterPro" id="IPR000332">
    <property type="entry name" value="ADRB2_rcpt"/>
</dbReference>
<dbReference type="InterPro" id="IPR000276">
    <property type="entry name" value="GPCR_Rhodpsn"/>
</dbReference>
<dbReference type="InterPro" id="IPR017452">
    <property type="entry name" value="GPCR_Rhodpsn_7TM"/>
</dbReference>
<dbReference type="PANTHER" id="PTHR24248">
    <property type="entry name" value="ADRENERGIC RECEPTOR-RELATED G-PROTEIN COUPLED RECEPTOR"/>
    <property type="match status" value="1"/>
</dbReference>
<dbReference type="PANTHER" id="PTHR24248:SF21">
    <property type="entry name" value="BETA-2 ADRENERGIC RECEPTOR"/>
    <property type="match status" value="1"/>
</dbReference>
<dbReference type="Pfam" id="PF00001">
    <property type="entry name" value="7tm_1"/>
    <property type="match status" value="1"/>
</dbReference>
<dbReference type="PRINTS" id="PR01103">
    <property type="entry name" value="ADRENERGICR"/>
</dbReference>
<dbReference type="PRINTS" id="PR00562">
    <property type="entry name" value="ADRENRGCB2AR"/>
</dbReference>
<dbReference type="PRINTS" id="PR00237">
    <property type="entry name" value="GPCRRHODOPSN"/>
</dbReference>
<dbReference type="SMART" id="SM01381">
    <property type="entry name" value="7TM_GPCR_Srsx"/>
    <property type="match status" value="1"/>
</dbReference>
<dbReference type="SUPFAM" id="SSF81321">
    <property type="entry name" value="Family A G protein-coupled receptor-like"/>
    <property type="match status" value="1"/>
</dbReference>
<dbReference type="PROSITE" id="PS00237">
    <property type="entry name" value="G_PROTEIN_RECEP_F1_1"/>
    <property type="match status" value="1"/>
</dbReference>
<dbReference type="PROSITE" id="PS50262">
    <property type="entry name" value="G_PROTEIN_RECEP_F1_2"/>
    <property type="match status" value="1"/>
</dbReference>
<accession>Q4KWL2</accession>
<keyword id="KW-1003">Cell membrane</keyword>
<keyword id="KW-1015">Disulfide bond</keyword>
<keyword id="KW-0967">Endosome</keyword>
<keyword id="KW-0297">G-protein coupled receptor</keyword>
<keyword id="KW-0325">Glycoprotein</keyword>
<keyword id="KW-0333">Golgi apparatus</keyword>
<keyword id="KW-0379">Hydroxylation</keyword>
<keyword id="KW-0449">Lipoprotein</keyword>
<keyword id="KW-0472">Membrane</keyword>
<keyword id="KW-0564">Palmitate</keyword>
<keyword id="KW-0597">Phosphoprotein</keyword>
<keyword id="KW-0675">Receptor</keyword>
<keyword id="KW-0807">Transducer</keyword>
<keyword id="KW-0812">Transmembrane</keyword>
<keyword id="KW-1133">Transmembrane helix</keyword>
<keyword id="KW-0832">Ubl conjugation</keyword>
<reference key="1">
    <citation type="submission" date="2004-07" db="EMBL/GenBank/DDBJ databases">
        <title>Cloning and functional analysis of beta2 adrenergic receptor from greater long-tailed hamster.</title>
        <authorList>
            <person name="Yang S.M."/>
            <person name="Song R."/>
            <person name="Cheng X.G."/>
        </authorList>
    </citation>
    <scope>NUCLEOTIDE SEQUENCE [MRNA]</scope>
</reference>
<proteinExistence type="evidence at transcript level"/>
<gene>
    <name type="primary">ADRB2</name>
</gene>
<name>ADRB2_TSCTR</name>
<sequence>MGPPGNDSDFLLTPNGSHTPDHDITQERDEAWVVGMAILMSVIVLAIVFGNVLVITAIAKFERLQTVTNYFITSLACADLVMGLAVVPFGASHILMKMWNFGNFWCEFWTSIDVLCVTASIETLCVIAVDRYIAITSPFKYQSLLTKNKARMVILMVWIVSGLTSFLPIQMHWYRATHEKAITCYRNETCCDFFTNQAYAIASSIVSFYVPLVVMVFVYSRVFQVAKRQLQKIDKSEGRFHSQNLSQVEQDGRSGHGLRRSSKFCLKEHKALKTLGIIMGTFTLCWLPFFIVNIVHVIQENLIPKEVYILLNWLGYVNSAFNPLIYCRSPDFRIAFQELLCLRRSSAKAYGNGYSSNSNGKSDYMGEASECQLRQEKESELLCEDPPGMESFANCQGTVPSLSLDSQGRNCSTNDSPL</sequence>
<feature type="chain" id="PRO_0000254954" description="Beta-2 adrenergic receptor">
    <location>
        <begin position="1"/>
        <end position="418"/>
    </location>
</feature>
<feature type="topological domain" description="Extracellular" evidence="1">
    <location>
        <begin position="1"/>
        <end position="34"/>
    </location>
</feature>
<feature type="transmembrane region" description="Helical; Name=1" evidence="1">
    <location>
        <begin position="35"/>
        <end position="58"/>
    </location>
</feature>
<feature type="topological domain" description="Cytoplasmic" evidence="1">
    <location>
        <begin position="59"/>
        <end position="71"/>
    </location>
</feature>
<feature type="transmembrane region" description="Helical; Name=2" evidence="1">
    <location>
        <begin position="72"/>
        <end position="95"/>
    </location>
</feature>
<feature type="topological domain" description="Extracellular" evidence="1">
    <location>
        <begin position="96"/>
        <end position="106"/>
    </location>
</feature>
<feature type="transmembrane region" description="Helical; Name=3" evidence="1">
    <location>
        <begin position="107"/>
        <end position="129"/>
    </location>
</feature>
<feature type="topological domain" description="Cytoplasmic" evidence="1">
    <location>
        <begin position="130"/>
        <end position="150"/>
    </location>
</feature>
<feature type="transmembrane region" description="Helical; Name=4" evidence="1">
    <location>
        <begin position="151"/>
        <end position="174"/>
    </location>
</feature>
<feature type="topological domain" description="Extracellular" evidence="1">
    <location>
        <begin position="175"/>
        <end position="196"/>
    </location>
</feature>
<feature type="transmembrane region" description="Helical; Name=5" evidence="1">
    <location>
        <begin position="197"/>
        <end position="220"/>
    </location>
</feature>
<feature type="topological domain" description="Cytoplasmic" evidence="1">
    <location>
        <begin position="221"/>
        <end position="274"/>
    </location>
</feature>
<feature type="transmembrane region" description="Helical; Name=6" evidence="1">
    <location>
        <begin position="275"/>
        <end position="298"/>
    </location>
</feature>
<feature type="topological domain" description="Extracellular" evidence="1">
    <location>
        <begin position="299"/>
        <end position="305"/>
    </location>
</feature>
<feature type="transmembrane region" description="Helical; Name=7" evidence="1">
    <location>
        <begin position="306"/>
        <end position="329"/>
    </location>
</feature>
<feature type="topological domain" description="Cytoplasmic" evidence="1">
    <location>
        <begin position="330"/>
        <end position="418"/>
    </location>
</feature>
<feature type="region of interest" description="Disordered" evidence="5">
    <location>
        <begin position="1"/>
        <end position="23"/>
    </location>
</feature>
<feature type="short sequence motif" description="PDZ-binding">
    <location>
        <begin position="415"/>
        <end position="418"/>
    </location>
</feature>
<feature type="modified residue" description="Phosphotyrosine" evidence="2">
    <location>
        <position position="141"/>
    </location>
</feature>
<feature type="modified residue" description="Phosphoserine" evidence="2">
    <location>
        <position position="246"/>
    </location>
</feature>
<feature type="modified residue" description="Phosphoserine; by PKA" evidence="3">
    <location>
        <position position="261"/>
    </location>
</feature>
<feature type="modified residue" description="Phosphoserine; by PKA" evidence="3">
    <location>
        <position position="262"/>
    </location>
</feature>
<feature type="modified residue" description="Phosphoserine; by PKA" evidence="2">
    <location>
        <position position="345"/>
    </location>
</feature>
<feature type="modified residue" description="Phosphoserine; by PKA" evidence="2">
    <location>
        <position position="346"/>
    </location>
</feature>
<feature type="modified residue" description="Phosphoserine; by BARK" evidence="6">
    <location>
        <position position="355"/>
    </location>
</feature>
<feature type="modified residue" description="Phosphoserine; by BARK" evidence="6">
    <location>
        <position position="356"/>
    </location>
</feature>
<feature type="modified residue" description="4-hydroxyproline" evidence="1">
    <location>
        <position position="387"/>
    </location>
</feature>
<feature type="modified residue" description="4-hydroxyproline" evidence="1">
    <location>
        <position position="400"/>
    </location>
</feature>
<feature type="lipid moiety-binding region" description="S-palmitoyl cysteine" evidence="2">
    <location>
        <position position="265"/>
    </location>
</feature>
<feature type="lipid moiety-binding region" description="S-palmitoyl cysteine" evidence="2">
    <location>
        <position position="341"/>
    </location>
</feature>
<feature type="glycosylation site" description="N-linked (GlcNAc...) asparagine" evidence="3">
    <location>
        <position position="6"/>
    </location>
</feature>
<feature type="glycosylation site" description="N-linked (GlcNAc...) asparagine" evidence="3">
    <location>
        <position position="15"/>
    </location>
</feature>
<feature type="disulfide bond" evidence="4">
    <location>
        <begin position="106"/>
        <end position="191"/>
    </location>
</feature>
<feature type="disulfide bond" evidence="4">
    <location>
        <begin position="184"/>
        <end position="190"/>
    </location>
</feature>
<protein>
    <recommendedName>
        <fullName>Beta-2 adrenergic receptor</fullName>
    </recommendedName>
    <alternativeName>
        <fullName>Beta-2 adrenoreceptor</fullName>
        <shortName>Beta-2 adrenoceptor</shortName>
    </alternativeName>
</protein>